<organism>
    <name type="scientific">Shewanella baltica (strain OS185)</name>
    <dbReference type="NCBI Taxonomy" id="402882"/>
    <lineage>
        <taxon>Bacteria</taxon>
        <taxon>Pseudomonadati</taxon>
        <taxon>Pseudomonadota</taxon>
        <taxon>Gammaproteobacteria</taxon>
        <taxon>Alteromonadales</taxon>
        <taxon>Shewanellaceae</taxon>
        <taxon>Shewanella</taxon>
    </lineage>
</organism>
<gene>
    <name evidence="1" type="primary">rlmH</name>
    <name type="ordered locus">Shew185_3316</name>
</gene>
<accession>A6WRK4</accession>
<evidence type="ECO:0000255" key="1">
    <source>
        <dbReference type="HAMAP-Rule" id="MF_00658"/>
    </source>
</evidence>
<protein>
    <recommendedName>
        <fullName evidence="1">Ribosomal RNA large subunit methyltransferase H</fullName>
        <ecNumber evidence="1">2.1.1.177</ecNumber>
    </recommendedName>
    <alternativeName>
        <fullName evidence="1">23S rRNA (pseudouridine1915-N3)-methyltransferase</fullName>
    </alternativeName>
    <alternativeName>
        <fullName evidence="1">23S rRNA m3Psi1915 methyltransferase</fullName>
    </alternativeName>
    <alternativeName>
        <fullName evidence="1">rRNA (pseudouridine-N3-)-methyltransferase RlmH</fullName>
    </alternativeName>
</protein>
<dbReference type="EC" id="2.1.1.177" evidence="1"/>
<dbReference type="EMBL" id="CP000753">
    <property type="protein sequence ID" value="ABS09443.1"/>
    <property type="molecule type" value="Genomic_DNA"/>
</dbReference>
<dbReference type="RefSeq" id="WP_006082752.1">
    <property type="nucleotide sequence ID" value="NC_009665.1"/>
</dbReference>
<dbReference type="SMR" id="A6WRK4"/>
<dbReference type="GeneID" id="11774932"/>
<dbReference type="KEGG" id="sbm:Shew185_3316"/>
<dbReference type="HOGENOM" id="CLU_100552_1_0_6"/>
<dbReference type="GO" id="GO:0005737">
    <property type="term" value="C:cytoplasm"/>
    <property type="evidence" value="ECO:0007669"/>
    <property type="project" value="UniProtKB-SubCell"/>
</dbReference>
<dbReference type="GO" id="GO:0070038">
    <property type="term" value="F:rRNA (pseudouridine-N3-)-methyltransferase activity"/>
    <property type="evidence" value="ECO:0007669"/>
    <property type="project" value="UniProtKB-UniRule"/>
</dbReference>
<dbReference type="CDD" id="cd18081">
    <property type="entry name" value="RlmH-like"/>
    <property type="match status" value="1"/>
</dbReference>
<dbReference type="Gene3D" id="3.40.1280.10">
    <property type="match status" value="1"/>
</dbReference>
<dbReference type="HAMAP" id="MF_00658">
    <property type="entry name" value="23SrRNA_methyltr_H"/>
    <property type="match status" value="1"/>
</dbReference>
<dbReference type="InterPro" id="IPR029028">
    <property type="entry name" value="Alpha/beta_knot_MTases"/>
</dbReference>
<dbReference type="InterPro" id="IPR003742">
    <property type="entry name" value="RlmH-like"/>
</dbReference>
<dbReference type="InterPro" id="IPR029026">
    <property type="entry name" value="tRNA_m1G_MTases_N"/>
</dbReference>
<dbReference type="NCBIfam" id="NF000984">
    <property type="entry name" value="PRK00103.1-1"/>
    <property type="match status" value="1"/>
</dbReference>
<dbReference type="NCBIfam" id="NF000986">
    <property type="entry name" value="PRK00103.1-4"/>
    <property type="match status" value="1"/>
</dbReference>
<dbReference type="NCBIfam" id="TIGR00246">
    <property type="entry name" value="tRNA_RlmH_YbeA"/>
    <property type="match status" value="1"/>
</dbReference>
<dbReference type="PANTHER" id="PTHR33603">
    <property type="entry name" value="METHYLTRANSFERASE"/>
    <property type="match status" value="1"/>
</dbReference>
<dbReference type="PANTHER" id="PTHR33603:SF1">
    <property type="entry name" value="RIBOSOMAL RNA LARGE SUBUNIT METHYLTRANSFERASE H"/>
    <property type="match status" value="1"/>
</dbReference>
<dbReference type="Pfam" id="PF02590">
    <property type="entry name" value="SPOUT_MTase"/>
    <property type="match status" value="1"/>
</dbReference>
<dbReference type="PIRSF" id="PIRSF004505">
    <property type="entry name" value="MT_bac"/>
    <property type="match status" value="1"/>
</dbReference>
<dbReference type="SUPFAM" id="SSF75217">
    <property type="entry name" value="alpha/beta knot"/>
    <property type="match status" value="1"/>
</dbReference>
<comment type="function">
    <text evidence="1">Specifically methylates the pseudouridine at position 1915 (m3Psi1915) in 23S rRNA.</text>
</comment>
<comment type="catalytic activity">
    <reaction evidence="1">
        <text>pseudouridine(1915) in 23S rRNA + S-adenosyl-L-methionine = N(3)-methylpseudouridine(1915) in 23S rRNA + S-adenosyl-L-homocysteine + H(+)</text>
        <dbReference type="Rhea" id="RHEA:42752"/>
        <dbReference type="Rhea" id="RHEA-COMP:10221"/>
        <dbReference type="Rhea" id="RHEA-COMP:10222"/>
        <dbReference type="ChEBI" id="CHEBI:15378"/>
        <dbReference type="ChEBI" id="CHEBI:57856"/>
        <dbReference type="ChEBI" id="CHEBI:59789"/>
        <dbReference type="ChEBI" id="CHEBI:65314"/>
        <dbReference type="ChEBI" id="CHEBI:74486"/>
        <dbReference type="EC" id="2.1.1.177"/>
    </reaction>
</comment>
<comment type="subunit">
    <text evidence="1">Homodimer.</text>
</comment>
<comment type="subcellular location">
    <subcellularLocation>
        <location evidence="1">Cytoplasm</location>
    </subcellularLocation>
</comment>
<comment type="similarity">
    <text evidence="1">Belongs to the RNA methyltransferase RlmH family.</text>
</comment>
<feature type="chain" id="PRO_1000061837" description="Ribosomal RNA large subunit methyltransferase H">
    <location>
        <begin position="1"/>
        <end position="156"/>
    </location>
</feature>
<feature type="binding site" evidence="1">
    <location>
        <position position="73"/>
    </location>
    <ligand>
        <name>S-adenosyl-L-methionine</name>
        <dbReference type="ChEBI" id="CHEBI:59789"/>
    </ligand>
</feature>
<feature type="binding site" evidence="1">
    <location>
        <position position="104"/>
    </location>
    <ligand>
        <name>S-adenosyl-L-methionine</name>
        <dbReference type="ChEBI" id="CHEBI:59789"/>
    </ligand>
</feature>
<feature type="binding site" evidence="1">
    <location>
        <begin position="123"/>
        <end position="128"/>
    </location>
    <ligand>
        <name>S-adenosyl-L-methionine</name>
        <dbReference type="ChEBI" id="CHEBI:59789"/>
    </ligand>
</feature>
<keyword id="KW-0963">Cytoplasm</keyword>
<keyword id="KW-0489">Methyltransferase</keyword>
<keyword id="KW-0698">rRNA processing</keyword>
<keyword id="KW-0949">S-adenosyl-L-methionine</keyword>
<keyword id="KW-0808">Transferase</keyword>
<sequence>MKLQLIAVGTRMPDWVTRGFEEYQRRFPRDMALELIEIPAGKRGKNADIVRILQKEGEQMLAAIPKGNHIVSLDLPGKNWTTPELATALTKWQLDGRDVSLLIGGPEGLAPACKEAANQSWCLSALTLPHPLVRVVVAESLYRAWSVNTNHPYHRE</sequence>
<reference key="1">
    <citation type="submission" date="2007-07" db="EMBL/GenBank/DDBJ databases">
        <title>Complete sequence of chromosome of Shewanella baltica OS185.</title>
        <authorList>
            <consortium name="US DOE Joint Genome Institute"/>
            <person name="Copeland A."/>
            <person name="Lucas S."/>
            <person name="Lapidus A."/>
            <person name="Barry K."/>
            <person name="Glavina del Rio T."/>
            <person name="Dalin E."/>
            <person name="Tice H."/>
            <person name="Pitluck S."/>
            <person name="Sims D."/>
            <person name="Brettin T."/>
            <person name="Bruce D."/>
            <person name="Detter J.C."/>
            <person name="Han C."/>
            <person name="Schmutz J."/>
            <person name="Larimer F."/>
            <person name="Land M."/>
            <person name="Hauser L."/>
            <person name="Kyrpides N."/>
            <person name="Mikhailova N."/>
            <person name="Brettar I."/>
            <person name="Rodrigues J."/>
            <person name="Konstantinidis K."/>
            <person name="Tiedje J."/>
            <person name="Richardson P."/>
        </authorList>
    </citation>
    <scope>NUCLEOTIDE SEQUENCE [LARGE SCALE GENOMIC DNA]</scope>
    <source>
        <strain>OS185</strain>
    </source>
</reference>
<name>RLMH_SHEB8</name>
<proteinExistence type="inferred from homology"/>